<sequence length="197" mass="20969">MTVVPIRIVGDPVLHTATTPVTVAADGSLPADLAQLIATMYDTMDAANGVGLAANQIGCSLRLFVYDCAADRAMTARRRGVVINPVLETSEIPETMPDPDTDDEGCLSVPGESFPTGRAKWARVTGLDADGSPVSIEGTGLFARMLQHETGHLDGFLYLDRLIGRYARNAKRAVKSHGWGVPGLSWLPGEDPDPFGH</sequence>
<gene>
    <name evidence="1" type="primary">def</name>
    <name type="ordered locus">BQ2027_MB0437C</name>
</gene>
<feature type="chain" id="PRO_0000082799" description="Peptide deformylase">
    <location>
        <begin position="1"/>
        <end position="197"/>
    </location>
</feature>
<feature type="active site" evidence="1">
    <location>
        <position position="149"/>
    </location>
</feature>
<feature type="binding site" evidence="1">
    <location>
        <position position="106"/>
    </location>
    <ligand>
        <name>Fe cation</name>
        <dbReference type="ChEBI" id="CHEBI:24875"/>
    </ligand>
</feature>
<feature type="binding site" evidence="1">
    <location>
        <position position="148"/>
    </location>
    <ligand>
        <name>Fe cation</name>
        <dbReference type="ChEBI" id="CHEBI:24875"/>
    </ligand>
</feature>
<feature type="binding site" evidence="1">
    <location>
        <position position="152"/>
    </location>
    <ligand>
        <name>Fe cation</name>
        <dbReference type="ChEBI" id="CHEBI:24875"/>
    </ligand>
</feature>
<name>DEF_MYCBO</name>
<reference key="1">
    <citation type="journal article" date="2003" name="Proc. Natl. Acad. Sci. U.S.A.">
        <title>The complete genome sequence of Mycobacterium bovis.</title>
        <authorList>
            <person name="Garnier T."/>
            <person name="Eiglmeier K."/>
            <person name="Camus J.-C."/>
            <person name="Medina N."/>
            <person name="Mansoor H."/>
            <person name="Pryor M."/>
            <person name="Duthoy S."/>
            <person name="Grondin S."/>
            <person name="Lacroix C."/>
            <person name="Monsempe C."/>
            <person name="Simon S."/>
            <person name="Harris B."/>
            <person name="Atkin R."/>
            <person name="Doggett J."/>
            <person name="Mayes R."/>
            <person name="Keating L."/>
            <person name="Wheeler P.R."/>
            <person name="Parkhill J."/>
            <person name="Barrell B.G."/>
            <person name="Cole S.T."/>
            <person name="Gordon S.V."/>
            <person name="Hewinson R.G."/>
        </authorList>
    </citation>
    <scope>NUCLEOTIDE SEQUENCE [LARGE SCALE GENOMIC DNA]</scope>
    <source>
        <strain>ATCC BAA-935 / AF2122/97</strain>
    </source>
</reference>
<reference key="2">
    <citation type="journal article" date="2017" name="Genome Announc.">
        <title>Updated reference genome sequence and annotation of Mycobacterium bovis AF2122/97.</title>
        <authorList>
            <person name="Malone K.M."/>
            <person name="Farrell D."/>
            <person name="Stuber T.P."/>
            <person name="Schubert O.T."/>
            <person name="Aebersold R."/>
            <person name="Robbe-Austerman S."/>
            <person name="Gordon S.V."/>
        </authorList>
    </citation>
    <scope>NUCLEOTIDE SEQUENCE [LARGE SCALE GENOMIC DNA]</scope>
    <scope>GENOME REANNOTATION</scope>
    <source>
        <strain>ATCC BAA-935 / AF2122/97</strain>
    </source>
</reference>
<keyword id="KW-0378">Hydrolase</keyword>
<keyword id="KW-0408">Iron</keyword>
<keyword id="KW-0479">Metal-binding</keyword>
<keyword id="KW-0648">Protein biosynthesis</keyword>
<keyword id="KW-1185">Reference proteome</keyword>
<evidence type="ECO:0000255" key="1">
    <source>
        <dbReference type="HAMAP-Rule" id="MF_00163"/>
    </source>
</evidence>
<comment type="function">
    <text evidence="1">Removes the formyl group from the N-terminal Met of newly synthesized proteins. Requires at least a dipeptide for an efficient rate of reaction. N-terminal L-methionine is a prerequisite for activity but the enzyme has broad specificity at other positions.</text>
</comment>
<comment type="catalytic activity">
    <reaction evidence="1">
        <text>N-terminal N-formyl-L-methionyl-[peptide] + H2O = N-terminal L-methionyl-[peptide] + formate</text>
        <dbReference type="Rhea" id="RHEA:24420"/>
        <dbReference type="Rhea" id="RHEA-COMP:10639"/>
        <dbReference type="Rhea" id="RHEA-COMP:10640"/>
        <dbReference type="ChEBI" id="CHEBI:15377"/>
        <dbReference type="ChEBI" id="CHEBI:15740"/>
        <dbReference type="ChEBI" id="CHEBI:49298"/>
        <dbReference type="ChEBI" id="CHEBI:64731"/>
        <dbReference type="EC" id="3.5.1.88"/>
    </reaction>
</comment>
<comment type="cofactor">
    <cofactor evidence="1">
        <name>Fe(2+)</name>
        <dbReference type="ChEBI" id="CHEBI:29033"/>
    </cofactor>
    <text evidence="1">Binds 1 Fe(2+) ion.</text>
</comment>
<comment type="similarity">
    <text evidence="1">Belongs to the polypeptide deformylase family.</text>
</comment>
<protein>
    <recommendedName>
        <fullName evidence="1">Peptide deformylase</fullName>
        <shortName evidence="1">PDF</shortName>
        <ecNumber evidence="1">3.5.1.88</ecNumber>
    </recommendedName>
    <alternativeName>
        <fullName evidence="1">Polypeptide deformylase</fullName>
    </alternativeName>
</protein>
<proteinExistence type="inferred from homology"/>
<dbReference type="EC" id="3.5.1.88" evidence="1"/>
<dbReference type="EMBL" id="LT708304">
    <property type="protein sequence ID" value="SIT99020.1"/>
    <property type="molecule type" value="Genomic_DNA"/>
</dbReference>
<dbReference type="RefSeq" id="NP_854100.1">
    <property type="nucleotide sequence ID" value="NC_002945.3"/>
</dbReference>
<dbReference type="RefSeq" id="WP_010950402.1">
    <property type="nucleotide sequence ID" value="NC_002945.4"/>
</dbReference>
<dbReference type="SMR" id="Q7U206"/>
<dbReference type="PATRIC" id="fig|233413.5.peg.476"/>
<dbReference type="Proteomes" id="UP000001419">
    <property type="component" value="Chromosome"/>
</dbReference>
<dbReference type="GO" id="GO:0046872">
    <property type="term" value="F:metal ion binding"/>
    <property type="evidence" value="ECO:0007669"/>
    <property type="project" value="UniProtKB-KW"/>
</dbReference>
<dbReference type="GO" id="GO:0042586">
    <property type="term" value="F:peptide deformylase activity"/>
    <property type="evidence" value="ECO:0007669"/>
    <property type="project" value="UniProtKB-UniRule"/>
</dbReference>
<dbReference type="GO" id="GO:0043686">
    <property type="term" value="P:co-translational protein modification"/>
    <property type="evidence" value="ECO:0007669"/>
    <property type="project" value="TreeGrafter"/>
</dbReference>
<dbReference type="GO" id="GO:0006412">
    <property type="term" value="P:translation"/>
    <property type="evidence" value="ECO:0007669"/>
    <property type="project" value="UniProtKB-UniRule"/>
</dbReference>
<dbReference type="CDD" id="cd00487">
    <property type="entry name" value="Pep_deformylase"/>
    <property type="match status" value="1"/>
</dbReference>
<dbReference type="FunFam" id="3.90.45.10:FF:000011">
    <property type="entry name" value="Peptide deformylase"/>
    <property type="match status" value="1"/>
</dbReference>
<dbReference type="Gene3D" id="3.90.45.10">
    <property type="entry name" value="Peptide deformylase"/>
    <property type="match status" value="1"/>
</dbReference>
<dbReference type="HAMAP" id="MF_00163">
    <property type="entry name" value="Pep_deformylase"/>
    <property type="match status" value="1"/>
</dbReference>
<dbReference type="InterPro" id="IPR023635">
    <property type="entry name" value="Peptide_deformylase"/>
</dbReference>
<dbReference type="InterPro" id="IPR036821">
    <property type="entry name" value="Peptide_deformylase_sf"/>
</dbReference>
<dbReference type="NCBIfam" id="TIGR00079">
    <property type="entry name" value="pept_deformyl"/>
    <property type="match status" value="1"/>
</dbReference>
<dbReference type="NCBIfam" id="NF001159">
    <property type="entry name" value="PRK00150.1-3"/>
    <property type="match status" value="1"/>
</dbReference>
<dbReference type="NCBIfam" id="NF009483">
    <property type="entry name" value="PRK12846.1-4"/>
    <property type="match status" value="1"/>
</dbReference>
<dbReference type="PANTHER" id="PTHR10458">
    <property type="entry name" value="PEPTIDE DEFORMYLASE"/>
    <property type="match status" value="1"/>
</dbReference>
<dbReference type="PANTHER" id="PTHR10458:SF2">
    <property type="entry name" value="PEPTIDE DEFORMYLASE, MITOCHONDRIAL"/>
    <property type="match status" value="1"/>
</dbReference>
<dbReference type="Pfam" id="PF01327">
    <property type="entry name" value="Pep_deformylase"/>
    <property type="match status" value="1"/>
</dbReference>
<dbReference type="PIRSF" id="PIRSF004749">
    <property type="entry name" value="Pep_def"/>
    <property type="match status" value="1"/>
</dbReference>
<dbReference type="PRINTS" id="PR01576">
    <property type="entry name" value="PDEFORMYLASE"/>
</dbReference>
<dbReference type="SUPFAM" id="SSF56420">
    <property type="entry name" value="Peptide deformylase"/>
    <property type="match status" value="1"/>
</dbReference>
<organism>
    <name type="scientific">Mycobacterium bovis (strain ATCC BAA-935 / AF2122/97)</name>
    <dbReference type="NCBI Taxonomy" id="233413"/>
    <lineage>
        <taxon>Bacteria</taxon>
        <taxon>Bacillati</taxon>
        <taxon>Actinomycetota</taxon>
        <taxon>Actinomycetes</taxon>
        <taxon>Mycobacteriales</taxon>
        <taxon>Mycobacteriaceae</taxon>
        <taxon>Mycobacterium</taxon>
        <taxon>Mycobacterium tuberculosis complex</taxon>
    </lineage>
</organism>
<accession>Q7U206</accession>
<accession>A0A1R3XVB6</accession>
<accession>X2BF02</accession>